<gene>
    <name type="primary">RPL12</name>
</gene>
<dbReference type="EMBL" id="L06505">
    <property type="protein sequence ID" value="AAA36157.1"/>
    <property type="molecule type" value="mRNA"/>
</dbReference>
<dbReference type="EMBL" id="AL445222">
    <property type="status" value="NOT_ANNOTATED_CDS"/>
    <property type="molecule type" value="Genomic_DNA"/>
</dbReference>
<dbReference type="EMBL" id="CH471090">
    <property type="protein sequence ID" value="EAW87669.1"/>
    <property type="molecule type" value="Genomic_DNA"/>
</dbReference>
<dbReference type="EMBL" id="BC050644">
    <property type="protein sequence ID" value="AAH50644.1"/>
    <property type="molecule type" value="mRNA"/>
</dbReference>
<dbReference type="EMBL" id="BC059950">
    <property type="protein sequence ID" value="AAH59950.1"/>
    <property type="molecule type" value="mRNA"/>
</dbReference>
<dbReference type="EMBL" id="BC094831">
    <property type="protein sequence ID" value="AAH94831.1"/>
    <property type="molecule type" value="mRNA"/>
</dbReference>
<dbReference type="EMBL" id="BC105603">
    <property type="protein sequence ID" value="AAI05604.1"/>
    <property type="molecule type" value="mRNA"/>
</dbReference>
<dbReference type="CCDS" id="CCDS6872.1">
    <molecule id="P30050-1"/>
</dbReference>
<dbReference type="PIR" id="S35531">
    <property type="entry name" value="S35531"/>
</dbReference>
<dbReference type="RefSeq" id="NP_000967.1">
    <molecule id="P30050-1"/>
    <property type="nucleotide sequence ID" value="NM_000976.4"/>
</dbReference>
<dbReference type="PDB" id="4V6X">
    <property type="method" value="EM"/>
    <property type="resolution" value="5.00 A"/>
    <property type="chains" value="CK=1-165"/>
</dbReference>
<dbReference type="PDB" id="5A8L">
    <property type="method" value="EM"/>
    <property type="resolution" value="3.80 A"/>
    <property type="chains" value="G=1-165"/>
</dbReference>
<dbReference type="PDB" id="5AJ0">
    <property type="method" value="EM"/>
    <property type="resolution" value="3.50 A"/>
    <property type="chains" value="Aq=1-165"/>
</dbReference>
<dbReference type="PDB" id="6OLG">
    <property type="method" value="EM"/>
    <property type="resolution" value="3.40 A"/>
    <property type="chains" value="Aq=7-144"/>
</dbReference>
<dbReference type="PDB" id="6ZM7">
    <property type="method" value="EM"/>
    <property type="resolution" value="2.70 A"/>
    <property type="chains" value="Lt=1-165"/>
</dbReference>
<dbReference type="PDB" id="6ZME">
    <property type="method" value="EM"/>
    <property type="resolution" value="3.00 A"/>
    <property type="chains" value="Lt=1-165"/>
</dbReference>
<dbReference type="PDB" id="6ZMI">
    <property type="method" value="EM"/>
    <property type="resolution" value="2.60 A"/>
    <property type="chains" value="Lt=1-165"/>
</dbReference>
<dbReference type="PDB" id="6ZMO">
    <property type="method" value="EM"/>
    <property type="resolution" value="3.10 A"/>
    <property type="chains" value="Lt=1-165"/>
</dbReference>
<dbReference type="PDB" id="7VB2">
    <property type="method" value="NMR"/>
    <property type="chains" value="A=1-165"/>
</dbReference>
<dbReference type="PDB" id="8FKR">
    <property type="method" value="EM"/>
    <property type="resolution" value="2.89 A"/>
    <property type="chains" value="BA=1-165"/>
</dbReference>
<dbReference type="PDB" id="8FKS">
    <property type="method" value="EM"/>
    <property type="resolution" value="2.88 A"/>
    <property type="chains" value="BA=1-165"/>
</dbReference>
<dbReference type="PDB" id="8FKT">
    <property type="method" value="EM"/>
    <property type="resolution" value="2.81 A"/>
    <property type="chains" value="BA=1-165"/>
</dbReference>
<dbReference type="PDB" id="8FKU">
    <property type="method" value="EM"/>
    <property type="resolution" value="2.82 A"/>
    <property type="chains" value="BA=1-165"/>
</dbReference>
<dbReference type="PDB" id="8FKV">
    <property type="method" value="EM"/>
    <property type="resolution" value="2.47 A"/>
    <property type="chains" value="BA=1-165"/>
</dbReference>
<dbReference type="PDB" id="8FKW">
    <property type="method" value="EM"/>
    <property type="resolution" value="2.50 A"/>
    <property type="chains" value="BA=1-165"/>
</dbReference>
<dbReference type="PDB" id="8FKX">
    <property type="method" value="EM"/>
    <property type="resolution" value="2.59 A"/>
    <property type="chains" value="BA=1-165"/>
</dbReference>
<dbReference type="PDB" id="8FKY">
    <property type="method" value="EM"/>
    <property type="resolution" value="2.67 A"/>
    <property type="chains" value="BA=1-165"/>
</dbReference>
<dbReference type="PDB" id="8FKZ">
    <property type="method" value="EM"/>
    <property type="resolution" value="3.04 A"/>
    <property type="chains" value="BA=1-165"/>
</dbReference>
<dbReference type="PDB" id="8FL0">
    <property type="method" value="EM"/>
    <property type="resolution" value="2.91 A"/>
    <property type="chains" value="BA=1-165"/>
</dbReference>
<dbReference type="PDB" id="8FL2">
    <property type="method" value="EM"/>
    <property type="resolution" value="2.67 A"/>
    <property type="chains" value="BA=1-165"/>
</dbReference>
<dbReference type="PDB" id="8FL3">
    <property type="method" value="EM"/>
    <property type="resolution" value="2.53 A"/>
    <property type="chains" value="BA=1-165"/>
</dbReference>
<dbReference type="PDB" id="8FL4">
    <property type="method" value="EM"/>
    <property type="resolution" value="2.89 A"/>
    <property type="chains" value="BA=1-165"/>
</dbReference>
<dbReference type="PDB" id="8FL6">
    <property type="method" value="EM"/>
    <property type="resolution" value="2.62 A"/>
    <property type="chains" value="BA=1-165"/>
</dbReference>
<dbReference type="PDB" id="8FL7">
    <property type="method" value="EM"/>
    <property type="resolution" value="2.55 A"/>
    <property type="chains" value="BA=1-165"/>
</dbReference>
<dbReference type="PDB" id="8FL9">
    <property type="method" value="EM"/>
    <property type="resolution" value="2.75 A"/>
    <property type="chains" value="BA=1-165"/>
</dbReference>
<dbReference type="PDB" id="8FLA">
    <property type="method" value="EM"/>
    <property type="resolution" value="2.63 A"/>
    <property type="chains" value="BA=1-165"/>
</dbReference>
<dbReference type="PDB" id="8FLB">
    <property type="method" value="EM"/>
    <property type="resolution" value="2.55 A"/>
    <property type="chains" value="BA=1-165"/>
</dbReference>
<dbReference type="PDB" id="8FLC">
    <property type="method" value="EM"/>
    <property type="resolution" value="2.76 A"/>
    <property type="chains" value="BA=1-165"/>
</dbReference>
<dbReference type="PDB" id="8G5Z">
    <property type="method" value="EM"/>
    <property type="resolution" value="2.64 A"/>
    <property type="chains" value="LK=9-155"/>
</dbReference>
<dbReference type="PDB" id="8G60">
    <property type="method" value="EM"/>
    <property type="resolution" value="2.54 A"/>
    <property type="chains" value="LK=1-165"/>
</dbReference>
<dbReference type="PDB" id="8G6J">
    <property type="method" value="EM"/>
    <property type="resolution" value="2.80 A"/>
    <property type="chains" value="LK=1-165"/>
</dbReference>
<dbReference type="PDB" id="8IDT">
    <property type="method" value="EM"/>
    <property type="resolution" value="2.80 A"/>
    <property type="chains" value="y=1-165"/>
</dbReference>
<dbReference type="PDB" id="8IDY">
    <property type="method" value="EM"/>
    <property type="resolution" value="3.00 A"/>
    <property type="chains" value="y=1-165"/>
</dbReference>
<dbReference type="PDB" id="8INE">
    <property type="method" value="EM"/>
    <property type="resolution" value="3.20 A"/>
    <property type="chains" value="y=1-165"/>
</dbReference>
<dbReference type="PDB" id="8INF">
    <property type="method" value="EM"/>
    <property type="resolution" value="3.00 A"/>
    <property type="chains" value="y=1-165"/>
</dbReference>
<dbReference type="PDB" id="8INK">
    <property type="method" value="EM"/>
    <property type="resolution" value="3.20 A"/>
    <property type="chains" value="y=1-165"/>
</dbReference>
<dbReference type="PDB" id="8IPD">
    <property type="method" value="EM"/>
    <property type="resolution" value="3.20 A"/>
    <property type="chains" value="y=1-165"/>
</dbReference>
<dbReference type="PDB" id="8IPX">
    <property type="method" value="EM"/>
    <property type="resolution" value="4.30 A"/>
    <property type="chains" value="y=1-165"/>
</dbReference>
<dbReference type="PDB" id="8IPY">
    <property type="method" value="EM"/>
    <property type="resolution" value="3.20 A"/>
    <property type="chains" value="y=1-165"/>
</dbReference>
<dbReference type="PDB" id="8IR1">
    <property type="method" value="EM"/>
    <property type="resolution" value="3.30 A"/>
    <property type="chains" value="y=1-165"/>
</dbReference>
<dbReference type="PDB" id="8IR3">
    <property type="method" value="EM"/>
    <property type="resolution" value="3.50 A"/>
    <property type="chains" value="y=1-165"/>
</dbReference>
<dbReference type="PDB" id="8K2C">
    <property type="method" value="EM"/>
    <property type="resolution" value="2.40 A"/>
    <property type="chains" value="Lt=1-165"/>
</dbReference>
<dbReference type="PDB" id="8RL2">
    <property type="method" value="EM"/>
    <property type="resolution" value="2.84 A"/>
    <property type="chains" value="Lt=1-165"/>
</dbReference>
<dbReference type="PDB" id="8UKB">
    <property type="method" value="EM"/>
    <property type="resolution" value="3.05 A"/>
    <property type="chains" value="Lt=7-163"/>
</dbReference>
<dbReference type="PDB" id="8XSX">
    <property type="method" value="EM"/>
    <property type="resolution" value="2.40 A"/>
    <property type="chains" value="LK=1-165"/>
</dbReference>
<dbReference type="PDB" id="8XSY">
    <property type="method" value="EM"/>
    <property type="resolution" value="3.00 A"/>
    <property type="chains" value="Lt=1-165"/>
</dbReference>
<dbReference type="PDB" id="8XSZ">
    <property type="method" value="EM"/>
    <property type="resolution" value="3.20 A"/>
    <property type="chains" value="Lt=1-165"/>
</dbReference>
<dbReference type="PDB" id="8YOO">
    <property type="method" value="EM"/>
    <property type="resolution" value="2.00 A"/>
    <property type="chains" value="Lt=1-165"/>
</dbReference>
<dbReference type="PDB" id="8YOP">
    <property type="method" value="EM"/>
    <property type="resolution" value="2.20 A"/>
    <property type="chains" value="Lt=1-165"/>
</dbReference>
<dbReference type="PDBsum" id="4V6X"/>
<dbReference type="PDBsum" id="5A8L"/>
<dbReference type="PDBsum" id="5AJ0"/>
<dbReference type="PDBsum" id="6OLG"/>
<dbReference type="PDBsum" id="6ZM7"/>
<dbReference type="PDBsum" id="6ZME"/>
<dbReference type="PDBsum" id="6ZMI"/>
<dbReference type="PDBsum" id="6ZMO"/>
<dbReference type="PDBsum" id="7VB2"/>
<dbReference type="PDBsum" id="8FKR"/>
<dbReference type="PDBsum" id="8FKS"/>
<dbReference type="PDBsum" id="8FKT"/>
<dbReference type="PDBsum" id="8FKU"/>
<dbReference type="PDBsum" id="8FKV"/>
<dbReference type="PDBsum" id="8FKW"/>
<dbReference type="PDBsum" id="8FKX"/>
<dbReference type="PDBsum" id="8FKY"/>
<dbReference type="PDBsum" id="8FKZ"/>
<dbReference type="PDBsum" id="8FL0"/>
<dbReference type="PDBsum" id="8FL2"/>
<dbReference type="PDBsum" id="8FL3"/>
<dbReference type="PDBsum" id="8FL4"/>
<dbReference type="PDBsum" id="8FL6"/>
<dbReference type="PDBsum" id="8FL7"/>
<dbReference type="PDBsum" id="8FL9"/>
<dbReference type="PDBsum" id="8FLA"/>
<dbReference type="PDBsum" id="8FLB"/>
<dbReference type="PDBsum" id="8FLC"/>
<dbReference type="PDBsum" id="8G5Z"/>
<dbReference type="PDBsum" id="8G60"/>
<dbReference type="PDBsum" id="8G6J"/>
<dbReference type="PDBsum" id="8IDT"/>
<dbReference type="PDBsum" id="8IDY"/>
<dbReference type="PDBsum" id="8INE"/>
<dbReference type="PDBsum" id="8INF"/>
<dbReference type="PDBsum" id="8INK"/>
<dbReference type="PDBsum" id="8IPD"/>
<dbReference type="PDBsum" id="8IPX"/>
<dbReference type="PDBsum" id="8IPY"/>
<dbReference type="PDBsum" id="8IR1"/>
<dbReference type="PDBsum" id="8IR3"/>
<dbReference type="PDBsum" id="8K2C"/>
<dbReference type="PDBsum" id="8RL2"/>
<dbReference type="PDBsum" id="8UKB"/>
<dbReference type="PDBsum" id="8XSX"/>
<dbReference type="PDBsum" id="8XSY"/>
<dbReference type="PDBsum" id="8XSZ"/>
<dbReference type="PDBsum" id="8YOO"/>
<dbReference type="PDBsum" id="8YOP"/>
<dbReference type="EMDB" id="EMD-11288"/>
<dbReference type="EMDB" id="EMD-11289"/>
<dbReference type="EMDB" id="EMD-11292"/>
<dbReference type="EMDB" id="EMD-11299"/>
<dbReference type="EMDB" id="EMD-19330"/>
<dbReference type="EMDB" id="EMD-29254"/>
<dbReference type="EMDB" id="EMD-29255"/>
<dbReference type="EMDB" id="EMD-29256"/>
<dbReference type="EMDB" id="EMD-29257"/>
<dbReference type="EMDB" id="EMD-29258"/>
<dbReference type="EMDB" id="EMD-29259"/>
<dbReference type="EMDB" id="EMD-29260"/>
<dbReference type="EMDB" id="EMD-29261"/>
<dbReference type="EMDB" id="EMD-29262"/>
<dbReference type="EMDB" id="EMD-29263"/>
<dbReference type="EMDB" id="EMD-29265"/>
<dbReference type="EMDB" id="EMD-29266"/>
<dbReference type="EMDB" id="EMD-29267"/>
<dbReference type="EMDB" id="EMD-29268"/>
<dbReference type="EMDB" id="EMD-29269"/>
<dbReference type="EMDB" id="EMD-29271"/>
<dbReference type="EMDB" id="EMD-29272"/>
<dbReference type="EMDB" id="EMD-29273"/>
<dbReference type="EMDB" id="EMD-29274"/>
<dbReference type="EMDB" id="EMD-29758"/>
<dbReference type="EMDB" id="EMD-29759"/>
<dbReference type="EMDB" id="EMD-29771"/>
<dbReference type="EMDB" id="EMD-35370"/>
<dbReference type="EMDB" id="EMD-35371"/>
<dbReference type="EMDB" id="EMD-35596"/>
<dbReference type="EMDB" id="EMD-35597"/>
<dbReference type="EMDB" id="EMD-35599"/>
<dbReference type="EMDB" id="EMD-35639"/>
<dbReference type="EMDB" id="EMD-35649"/>
<dbReference type="EMDB" id="EMD-35651"/>
<dbReference type="EMDB" id="EMD-35672"/>
<dbReference type="EMDB" id="EMD-35673"/>
<dbReference type="EMDB" id="EMD-36838"/>
<dbReference type="EMDB" id="EMD-38629"/>
<dbReference type="EMDB" id="EMD-38630"/>
<dbReference type="EMDB" id="EMD-38631"/>
<dbReference type="EMDB" id="EMD-39455"/>
<dbReference type="EMDB" id="EMD-39456"/>
<dbReference type="EMDB" id="EMD-42351"/>
<dbReference type="SMR" id="P30050"/>
<dbReference type="BioGRID" id="112056">
    <property type="interactions" value="435"/>
</dbReference>
<dbReference type="ComplexPortal" id="CPX-5183">
    <property type="entry name" value="60S cytosolic large ribosomal subunit"/>
</dbReference>
<dbReference type="ComplexPortal" id="CPX-7664">
    <property type="entry name" value="60S cytosolic large ribosomal subunit, testis-specific variant"/>
</dbReference>
<dbReference type="ComplexPortal" id="CPX-7665">
    <property type="entry name" value="60S cytosolic large ribosomal subunit, striated muscle variant"/>
</dbReference>
<dbReference type="CORUM" id="P30050"/>
<dbReference type="FunCoup" id="P30050">
    <property type="interactions" value="1583"/>
</dbReference>
<dbReference type="IntAct" id="P30050">
    <property type="interactions" value="154"/>
</dbReference>
<dbReference type="MINT" id="P30050"/>
<dbReference type="STRING" id="9606.ENSP00000354739"/>
<dbReference type="GlyGen" id="P30050">
    <property type="glycosylation" value="1 site, 1 O-linked glycan (1 site)"/>
</dbReference>
<dbReference type="iPTMnet" id="P30050"/>
<dbReference type="PhosphoSitePlus" id="P30050"/>
<dbReference type="SwissPalm" id="P30050"/>
<dbReference type="BioMuta" id="RPL12"/>
<dbReference type="DMDM" id="266921"/>
<dbReference type="CPTAC" id="CPTAC-1001"/>
<dbReference type="jPOST" id="P30050"/>
<dbReference type="MassIVE" id="P30050"/>
<dbReference type="PaxDb" id="9606-ENSP00000354739"/>
<dbReference type="PeptideAtlas" id="P30050"/>
<dbReference type="ProteomicsDB" id="54630">
    <molecule id="P30050-1"/>
</dbReference>
<dbReference type="ProteomicsDB" id="54631">
    <molecule id="P30050-2"/>
</dbReference>
<dbReference type="Pumba" id="P30050"/>
<dbReference type="Antibodypedia" id="1253">
    <property type="antibodies" value="198 antibodies from 28 providers"/>
</dbReference>
<dbReference type="DNASU" id="6136"/>
<dbReference type="Ensembl" id="ENST00000361436.10">
    <molecule id="P30050-1"/>
    <property type="protein sequence ID" value="ENSP00000354739.5"/>
    <property type="gene ID" value="ENSG00000197958.13"/>
</dbReference>
<dbReference type="Ensembl" id="ENST00000536368.1">
    <molecule id="P30050-2"/>
    <property type="protein sequence ID" value="ENSP00000441179.1"/>
    <property type="gene ID" value="ENSG00000197958.13"/>
</dbReference>
<dbReference type="GeneID" id="6136"/>
<dbReference type="KEGG" id="hsa:6136"/>
<dbReference type="MANE-Select" id="ENST00000361436.10">
    <property type="protein sequence ID" value="ENSP00000354739.5"/>
    <property type="RefSeq nucleotide sequence ID" value="NM_000976.4"/>
    <property type="RefSeq protein sequence ID" value="NP_000967.1"/>
</dbReference>
<dbReference type="UCSC" id="uc004bqy.3">
    <molecule id="P30050-1"/>
    <property type="organism name" value="human"/>
</dbReference>
<dbReference type="AGR" id="HGNC:10302"/>
<dbReference type="CTD" id="6136"/>
<dbReference type="DisGeNET" id="6136"/>
<dbReference type="GeneCards" id="RPL12"/>
<dbReference type="HGNC" id="HGNC:10302">
    <property type="gene designation" value="RPL12"/>
</dbReference>
<dbReference type="HPA" id="ENSG00000197958">
    <property type="expression patterns" value="Low tissue specificity"/>
</dbReference>
<dbReference type="MIM" id="180475">
    <property type="type" value="gene"/>
</dbReference>
<dbReference type="neXtProt" id="NX_P30050"/>
<dbReference type="OpenTargets" id="ENSG00000197958"/>
<dbReference type="PharmGKB" id="PA34665"/>
<dbReference type="VEuPathDB" id="HostDB:ENSG00000197958"/>
<dbReference type="eggNOG" id="KOG0886">
    <property type="taxonomic scope" value="Eukaryota"/>
</dbReference>
<dbReference type="GeneTree" id="ENSGT00390000006922"/>
<dbReference type="HOGENOM" id="CLU_074237_5_0_1"/>
<dbReference type="InParanoid" id="P30050"/>
<dbReference type="OMA" id="QPPHDVI"/>
<dbReference type="OrthoDB" id="9550325at2759"/>
<dbReference type="PAN-GO" id="P30050">
    <property type="GO annotations" value="4 GO annotations based on evolutionary models"/>
</dbReference>
<dbReference type="PhylomeDB" id="P30050"/>
<dbReference type="TreeFam" id="TF300123"/>
<dbReference type="PathwayCommons" id="P30050"/>
<dbReference type="Reactome" id="R-HSA-156827">
    <property type="pathway name" value="L13a-mediated translational silencing of Ceruloplasmin expression"/>
</dbReference>
<dbReference type="Reactome" id="R-HSA-156902">
    <property type="pathway name" value="Peptide chain elongation"/>
</dbReference>
<dbReference type="Reactome" id="R-HSA-1799339">
    <property type="pathway name" value="SRP-dependent cotranslational protein targeting to membrane"/>
</dbReference>
<dbReference type="Reactome" id="R-HSA-192823">
    <property type="pathway name" value="Viral mRNA Translation"/>
</dbReference>
<dbReference type="Reactome" id="R-HSA-2408557">
    <property type="pathway name" value="Selenocysteine synthesis"/>
</dbReference>
<dbReference type="Reactome" id="R-HSA-6791226">
    <property type="pathway name" value="Major pathway of rRNA processing in the nucleolus and cytosol"/>
</dbReference>
<dbReference type="Reactome" id="R-HSA-72689">
    <property type="pathway name" value="Formation of a pool of free 40S subunits"/>
</dbReference>
<dbReference type="Reactome" id="R-HSA-72706">
    <property type="pathway name" value="GTP hydrolysis and joining of the 60S ribosomal subunit"/>
</dbReference>
<dbReference type="Reactome" id="R-HSA-72764">
    <property type="pathway name" value="Eukaryotic Translation Termination"/>
</dbReference>
<dbReference type="Reactome" id="R-HSA-9010553">
    <property type="pathway name" value="Regulation of expression of SLITs and ROBOs"/>
</dbReference>
<dbReference type="Reactome" id="R-HSA-9633012">
    <property type="pathway name" value="Response of EIF2AK4 (GCN2) to amino acid deficiency"/>
</dbReference>
<dbReference type="Reactome" id="R-HSA-975956">
    <property type="pathway name" value="Nonsense Mediated Decay (NMD) independent of the Exon Junction Complex (EJC)"/>
</dbReference>
<dbReference type="Reactome" id="R-HSA-975957">
    <property type="pathway name" value="Nonsense Mediated Decay (NMD) enhanced by the Exon Junction Complex (EJC)"/>
</dbReference>
<dbReference type="SignaLink" id="P30050"/>
<dbReference type="SIGNOR" id="P30050"/>
<dbReference type="BioGRID-ORCS" id="6136">
    <property type="hits" value="816 hits in 1132 CRISPR screens"/>
</dbReference>
<dbReference type="CD-CODE" id="91857CE7">
    <property type="entry name" value="Nucleolus"/>
</dbReference>
<dbReference type="ChiTaRS" id="RPL12">
    <property type="organism name" value="human"/>
</dbReference>
<dbReference type="EvolutionaryTrace" id="P30050"/>
<dbReference type="GeneWiki" id="RPL12"/>
<dbReference type="GenomeRNAi" id="6136"/>
<dbReference type="Pharos" id="P30050">
    <property type="development level" value="Tbio"/>
</dbReference>
<dbReference type="PRO" id="PR:P30050"/>
<dbReference type="Proteomes" id="UP000005640">
    <property type="component" value="Chromosome 9"/>
</dbReference>
<dbReference type="RNAct" id="P30050">
    <property type="molecule type" value="protein"/>
</dbReference>
<dbReference type="Bgee" id="ENSG00000197958">
    <property type="expression patterns" value="Expressed in calcaneal tendon and 101 other cell types or tissues"/>
</dbReference>
<dbReference type="GO" id="GO:0005737">
    <property type="term" value="C:cytoplasm"/>
    <property type="evidence" value="ECO:0000303"/>
    <property type="project" value="ComplexPortal"/>
</dbReference>
<dbReference type="GO" id="GO:0005829">
    <property type="term" value="C:cytosol"/>
    <property type="evidence" value="ECO:0000304"/>
    <property type="project" value="Reactome"/>
</dbReference>
<dbReference type="GO" id="GO:0022625">
    <property type="term" value="C:cytosolic large ribosomal subunit"/>
    <property type="evidence" value="ECO:0000353"/>
    <property type="project" value="ComplexPortal"/>
</dbReference>
<dbReference type="GO" id="GO:0022626">
    <property type="term" value="C:cytosolic ribosome"/>
    <property type="evidence" value="ECO:0000314"/>
    <property type="project" value="FlyBase"/>
</dbReference>
<dbReference type="GO" id="GO:0070062">
    <property type="term" value="C:extracellular exosome"/>
    <property type="evidence" value="ECO:0007005"/>
    <property type="project" value="UniProtKB"/>
</dbReference>
<dbReference type="GO" id="GO:0005925">
    <property type="term" value="C:focal adhesion"/>
    <property type="evidence" value="ECO:0007005"/>
    <property type="project" value="UniProtKB"/>
</dbReference>
<dbReference type="GO" id="GO:0016020">
    <property type="term" value="C:membrane"/>
    <property type="evidence" value="ECO:0007005"/>
    <property type="project" value="UniProtKB"/>
</dbReference>
<dbReference type="GO" id="GO:0014069">
    <property type="term" value="C:postsynaptic density"/>
    <property type="evidence" value="ECO:0000314"/>
    <property type="project" value="SynGO"/>
</dbReference>
<dbReference type="GO" id="GO:0070180">
    <property type="term" value="F:large ribosomal subunit rRNA binding"/>
    <property type="evidence" value="ECO:0000318"/>
    <property type="project" value="GO_Central"/>
</dbReference>
<dbReference type="GO" id="GO:0003723">
    <property type="term" value="F:RNA binding"/>
    <property type="evidence" value="ECO:0007005"/>
    <property type="project" value="UniProtKB"/>
</dbReference>
<dbReference type="GO" id="GO:0003735">
    <property type="term" value="F:structural constituent of ribosome"/>
    <property type="evidence" value="ECO:0000314"/>
    <property type="project" value="FlyBase"/>
</dbReference>
<dbReference type="GO" id="GO:0002181">
    <property type="term" value="P:cytoplasmic translation"/>
    <property type="evidence" value="ECO:0000303"/>
    <property type="project" value="ComplexPortal"/>
</dbReference>
<dbReference type="GO" id="GO:0006412">
    <property type="term" value="P:translation"/>
    <property type="evidence" value="ECO:0000318"/>
    <property type="project" value="GO_Central"/>
</dbReference>
<dbReference type="CDD" id="cd00349">
    <property type="entry name" value="Ribosomal_L11"/>
    <property type="match status" value="1"/>
</dbReference>
<dbReference type="FunFam" id="1.10.10.250:FF:000002">
    <property type="entry name" value="60S ribosomal protein L12"/>
    <property type="match status" value="1"/>
</dbReference>
<dbReference type="FunFam" id="3.30.1550.10:FF:000002">
    <property type="entry name" value="60S ribosomal protein L12"/>
    <property type="match status" value="1"/>
</dbReference>
<dbReference type="Gene3D" id="1.10.10.250">
    <property type="entry name" value="Ribosomal protein L11, C-terminal domain"/>
    <property type="match status" value="1"/>
</dbReference>
<dbReference type="Gene3D" id="3.30.1550.10">
    <property type="entry name" value="Ribosomal protein L11/L12, N-terminal domain"/>
    <property type="match status" value="1"/>
</dbReference>
<dbReference type="HAMAP" id="MF_00736">
    <property type="entry name" value="Ribosomal_uL11"/>
    <property type="match status" value="1"/>
</dbReference>
<dbReference type="InterPro" id="IPR000911">
    <property type="entry name" value="Ribosomal_uL11"/>
</dbReference>
<dbReference type="InterPro" id="IPR020783">
    <property type="entry name" value="Ribosomal_uL11_C"/>
</dbReference>
<dbReference type="InterPro" id="IPR036769">
    <property type="entry name" value="Ribosomal_uL11_C_sf"/>
</dbReference>
<dbReference type="InterPro" id="IPR020785">
    <property type="entry name" value="Ribosomal_uL11_CS"/>
</dbReference>
<dbReference type="InterPro" id="IPR020784">
    <property type="entry name" value="Ribosomal_uL11_N"/>
</dbReference>
<dbReference type="InterPro" id="IPR036796">
    <property type="entry name" value="Ribosomal_uL11_N_sf"/>
</dbReference>
<dbReference type="PANTHER" id="PTHR11661">
    <property type="entry name" value="60S RIBOSOMAL PROTEIN L12"/>
    <property type="match status" value="1"/>
</dbReference>
<dbReference type="PANTHER" id="PTHR11661:SF2">
    <property type="entry name" value="LARGE RIBOSOMAL SUBUNIT PROTEIN UL11"/>
    <property type="match status" value="1"/>
</dbReference>
<dbReference type="Pfam" id="PF00298">
    <property type="entry name" value="Ribosomal_L11"/>
    <property type="match status" value="1"/>
</dbReference>
<dbReference type="Pfam" id="PF03946">
    <property type="entry name" value="Ribosomal_L11_N"/>
    <property type="match status" value="1"/>
</dbReference>
<dbReference type="SMART" id="SM00649">
    <property type="entry name" value="RL11"/>
    <property type="match status" value="1"/>
</dbReference>
<dbReference type="SUPFAM" id="SSF54747">
    <property type="entry name" value="Ribosomal L11/L12e N-terminal domain"/>
    <property type="match status" value="1"/>
</dbReference>
<dbReference type="SUPFAM" id="SSF46906">
    <property type="entry name" value="Ribosomal protein L11, C-terminal domain"/>
    <property type="match status" value="1"/>
</dbReference>
<dbReference type="PROSITE" id="PS00359">
    <property type="entry name" value="RIBOSOMAL_L11"/>
    <property type="match status" value="1"/>
</dbReference>
<accession>P30050</accession>
<accession>Q5VVV2</accession>
<accession>Q6PB27</accession>
<name>RL12_HUMAN</name>
<feature type="chain" id="PRO_0000104456" description="Large ribosomal subunit protein uL11">
    <location>
        <begin position="1"/>
        <end position="165"/>
    </location>
</feature>
<feature type="modified residue" description="Phosphoserine" evidence="7 8 10 11 12">
    <location>
        <position position="38"/>
    </location>
</feature>
<feature type="modified residue" description="N6-acetyllysine" evidence="9">
    <location>
        <position position="54"/>
    </location>
</feature>
<feature type="modified residue" description="Phosphoserine" evidence="13">
    <location>
        <position position="165"/>
    </location>
</feature>
<feature type="cross-link" description="Glycyl lysine isopeptide (Lys-Gly) (interchain with G-Cter in SUMO2)" evidence="14">
    <location>
        <position position="40"/>
    </location>
</feature>
<feature type="cross-link" description="Glycyl lysine isopeptide (Lys-Gly) (interchain with G-Cter in ubiquitin)" evidence="3">
    <location>
        <position position="48"/>
    </location>
</feature>
<feature type="cross-link" description="Glycyl lysine isopeptide (Lys-Gly) (interchain with G-Cter in ubiquitin)" evidence="3">
    <location>
        <position position="83"/>
    </location>
</feature>
<feature type="splice variant" id="VSP_034695" description="In isoform 2." evidence="4">
    <location>
        <begin position="38"/>
        <end position="70"/>
    </location>
</feature>
<feature type="strand" evidence="15">
    <location>
        <begin position="11"/>
        <end position="15"/>
    </location>
</feature>
<feature type="helix" evidence="15">
    <location>
        <begin position="28"/>
        <end position="35"/>
    </location>
</feature>
<feature type="helix" evidence="15">
    <location>
        <begin position="39"/>
        <end position="49"/>
    </location>
</feature>
<feature type="turn" evidence="15">
    <location>
        <begin position="50"/>
        <end position="53"/>
    </location>
</feature>
<feature type="strand" evidence="15">
    <location>
        <begin position="59"/>
        <end position="65"/>
    </location>
</feature>
<feature type="strand" evidence="15">
    <location>
        <begin position="68"/>
        <end position="77"/>
    </location>
</feature>
<feature type="helix" evidence="15">
    <location>
        <begin position="106"/>
        <end position="115"/>
    </location>
</feature>
<feature type="turn" evidence="15">
    <location>
        <begin position="118"/>
        <end position="120"/>
    </location>
</feature>
<feature type="helix" evidence="15">
    <location>
        <begin position="125"/>
        <end position="139"/>
    </location>
</feature>
<feature type="helix" evidence="15">
    <location>
        <begin position="148"/>
        <end position="158"/>
    </location>
</feature>
<reference key="1">
    <citation type="journal article" date="1993" name="Nucleic Acids Res.">
        <title>The primary structure of human ribosomal protein L12.</title>
        <authorList>
            <person name="Chu W."/>
            <person name="Presky D.H."/>
            <person name="Swerlisk R.A."/>
            <person name="Burns D.K."/>
        </authorList>
    </citation>
    <scope>NUCLEOTIDE SEQUENCE [MRNA] (ISOFORM 1)</scope>
</reference>
<reference key="2">
    <citation type="journal article" date="2004" name="Nature">
        <title>DNA sequence and analysis of human chromosome 9.</title>
        <authorList>
            <person name="Humphray S.J."/>
            <person name="Oliver K."/>
            <person name="Hunt A.R."/>
            <person name="Plumb R.W."/>
            <person name="Loveland J.E."/>
            <person name="Howe K.L."/>
            <person name="Andrews T.D."/>
            <person name="Searle S."/>
            <person name="Hunt S.E."/>
            <person name="Scott C.E."/>
            <person name="Jones M.C."/>
            <person name="Ainscough R."/>
            <person name="Almeida J.P."/>
            <person name="Ambrose K.D."/>
            <person name="Ashwell R.I.S."/>
            <person name="Babbage A.K."/>
            <person name="Babbage S."/>
            <person name="Bagguley C.L."/>
            <person name="Bailey J."/>
            <person name="Banerjee R."/>
            <person name="Barker D.J."/>
            <person name="Barlow K.F."/>
            <person name="Bates K."/>
            <person name="Beasley H."/>
            <person name="Beasley O."/>
            <person name="Bird C.P."/>
            <person name="Bray-Allen S."/>
            <person name="Brown A.J."/>
            <person name="Brown J.Y."/>
            <person name="Burford D."/>
            <person name="Burrill W."/>
            <person name="Burton J."/>
            <person name="Carder C."/>
            <person name="Carter N.P."/>
            <person name="Chapman J.C."/>
            <person name="Chen Y."/>
            <person name="Clarke G."/>
            <person name="Clark S.Y."/>
            <person name="Clee C.M."/>
            <person name="Clegg S."/>
            <person name="Collier R.E."/>
            <person name="Corby N."/>
            <person name="Crosier M."/>
            <person name="Cummings A.T."/>
            <person name="Davies J."/>
            <person name="Dhami P."/>
            <person name="Dunn M."/>
            <person name="Dutta I."/>
            <person name="Dyer L.W."/>
            <person name="Earthrowl M.E."/>
            <person name="Faulkner L."/>
            <person name="Fleming C.J."/>
            <person name="Frankish A."/>
            <person name="Frankland J.A."/>
            <person name="French L."/>
            <person name="Fricker D.G."/>
            <person name="Garner P."/>
            <person name="Garnett J."/>
            <person name="Ghori J."/>
            <person name="Gilbert J.G.R."/>
            <person name="Glison C."/>
            <person name="Grafham D.V."/>
            <person name="Gribble S."/>
            <person name="Griffiths C."/>
            <person name="Griffiths-Jones S."/>
            <person name="Grocock R."/>
            <person name="Guy J."/>
            <person name="Hall R.E."/>
            <person name="Hammond S."/>
            <person name="Harley J.L."/>
            <person name="Harrison E.S.I."/>
            <person name="Hart E.A."/>
            <person name="Heath P.D."/>
            <person name="Henderson C.D."/>
            <person name="Hopkins B.L."/>
            <person name="Howard P.J."/>
            <person name="Howden P.J."/>
            <person name="Huckle E."/>
            <person name="Johnson C."/>
            <person name="Johnson D."/>
            <person name="Joy A.A."/>
            <person name="Kay M."/>
            <person name="Keenan S."/>
            <person name="Kershaw J.K."/>
            <person name="Kimberley A.M."/>
            <person name="King A."/>
            <person name="Knights A."/>
            <person name="Laird G.K."/>
            <person name="Langford C."/>
            <person name="Lawlor S."/>
            <person name="Leongamornlert D.A."/>
            <person name="Leversha M."/>
            <person name="Lloyd C."/>
            <person name="Lloyd D.M."/>
            <person name="Lovell J."/>
            <person name="Martin S."/>
            <person name="Mashreghi-Mohammadi M."/>
            <person name="Matthews L."/>
            <person name="McLaren S."/>
            <person name="McLay K.E."/>
            <person name="McMurray A."/>
            <person name="Milne S."/>
            <person name="Nickerson T."/>
            <person name="Nisbett J."/>
            <person name="Nordsiek G."/>
            <person name="Pearce A.V."/>
            <person name="Peck A.I."/>
            <person name="Porter K.M."/>
            <person name="Pandian R."/>
            <person name="Pelan S."/>
            <person name="Phillimore B."/>
            <person name="Povey S."/>
            <person name="Ramsey Y."/>
            <person name="Rand V."/>
            <person name="Scharfe M."/>
            <person name="Sehra H.K."/>
            <person name="Shownkeen R."/>
            <person name="Sims S.K."/>
            <person name="Skuce C.D."/>
            <person name="Smith M."/>
            <person name="Steward C.A."/>
            <person name="Swarbreck D."/>
            <person name="Sycamore N."/>
            <person name="Tester J."/>
            <person name="Thorpe A."/>
            <person name="Tracey A."/>
            <person name="Tromans A."/>
            <person name="Thomas D.W."/>
            <person name="Wall M."/>
            <person name="Wallis J.M."/>
            <person name="West A.P."/>
            <person name="Whitehead S.L."/>
            <person name="Willey D.L."/>
            <person name="Williams S.A."/>
            <person name="Wilming L."/>
            <person name="Wray P.W."/>
            <person name="Young L."/>
            <person name="Ashurst J.L."/>
            <person name="Coulson A."/>
            <person name="Blocker H."/>
            <person name="Durbin R.M."/>
            <person name="Sulston J.E."/>
            <person name="Hubbard T."/>
            <person name="Jackson M.J."/>
            <person name="Bentley D.R."/>
            <person name="Beck S."/>
            <person name="Rogers J."/>
            <person name="Dunham I."/>
        </authorList>
    </citation>
    <scope>NUCLEOTIDE SEQUENCE [LARGE SCALE GENOMIC DNA]</scope>
</reference>
<reference key="3">
    <citation type="submission" date="2005-07" db="EMBL/GenBank/DDBJ databases">
        <authorList>
            <person name="Mural R.J."/>
            <person name="Istrail S."/>
            <person name="Sutton G.G."/>
            <person name="Florea L."/>
            <person name="Halpern A.L."/>
            <person name="Mobarry C.M."/>
            <person name="Lippert R."/>
            <person name="Walenz B."/>
            <person name="Shatkay H."/>
            <person name="Dew I."/>
            <person name="Miller J.R."/>
            <person name="Flanigan M.J."/>
            <person name="Edwards N.J."/>
            <person name="Bolanos R."/>
            <person name="Fasulo D."/>
            <person name="Halldorsson B.V."/>
            <person name="Hannenhalli S."/>
            <person name="Turner R."/>
            <person name="Yooseph S."/>
            <person name="Lu F."/>
            <person name="Nusskern D.R."/>
            <person name="Shue B.C."/>
            <person name="Zheng X.H."/>
            <person name="Zhong F."/>
            <person name="Delcher A.L."/>
            <person name="Huson D.H."/>
            <person name="Kravitz S.A."/>
            <person name="Mouchard L."/>
            <person name="Reinert K."/>
            <person name="Remington K.A."/>
            <person name="Clark A.G."/>
            <person name="Waterman M.S."/>
            <person name="Eichler E.E."/>
            <person name="Adams M.D."/>
            <person name="Hunkapiller M.W."/>
            <person name="Myers E.W."/>
            <person name="Venter J.C."/>
        </authorList>
    </citation>
    <scope>NUCLEOTIDE SEQUENCE [LARGE SCALE GENOMIC DNA]</scope>
</reference>
<reference key="4">
    <citation type="journal article" date="2004" name="Genome Res.">
        <title>The status, quality, and expansion of the NIH full-length cDNA project: the Mammalian Gene Collection (MGC).</title>
        <authorList>
            <consortium name="The MGC Project Team"/>
        </authorList>
    </citation>
    <scope>NUCLEOTIDE SEQUENCE [LARGE SCALE MRNA] (ISOFORMS 1 AND 2)</scope>
    <source>
        <tissue>Ovary</tissue>
    </source>
</reference>
<reference key="5">
    <citation type="journal article" date="2003" name="Nature">
        <title>Proteomic characterization of the human centrosome by protein correlation profiling.</title>
        <authorList>
            <person name="Andersen J.S."/>
            <person name="Wilkinson C.J."/>
            <person name="Mayor T."/>
            <person name="Mortensen P."/>
            <person name="Nigg E.A."/>
            <person name="Mann M."/>
        </authorList>
    </citation>
    <scope>IDENTIFICATION BY MASS SPECTROMETRY</scope>
    <source>
        <tissue>Lymphoblast</tissue>
    </source>
</reference>
<reference key="6">
    <citation type="journal article" date="2006" name="Nat. Biotechnol.">
        <title>A probability-based approach for high-throughput protein phosphorylation analysis and site localization.</title>
        <authorList>
            <person name="Beausoleil S.A."/>
            <person name="Villen J."/>
            <person name="Gerber S.A."/>
            <person name="Rush J."/>
            <person name="Gygi S.P."/>
        </authorList>
    </citation>
    <scope>PHOSPHORYLATION [LARGE SCALE ANALYSIS] AT SER-38</scope>
    <scope>IDENTIFICATION BY MASS SPECTROMETRY [LARGE SCALE ANALYSIS]</scope>
    <source>
        <tissue>Cervix carcinoma</tissue>
    </source>
</reference>
<reference key="7">
    <citation type="journal article" date="2008" name="Mol. Cell">
        <title>Kinase-selective enrichment enables quantitative phosphoproteomics of the kinome across the cell cycle.</title>
        <authorList>
            <person name="Daub H."/>
            <person name="Olsen J.V."/>
            <person name="Bairlein M."/>
            <person name="Gnad F."/>
            <person name="Oppermann F.S."/>
            <person name="Korner R."/>
            <person name="Greff Z."/>
            <person name="Keri G."/>
            <person name="Stemmann O."/>
            <person name="Mann M."/>
        </authorList>
    </citation>
    <scope>PHOSPHORYLATION [LARGE SCALE ANALYSIS] AT SER-38</scope>
    <scope>IDENTIFICATION BY MASS SPECTROMETRY [LARGE SCALE ANALYSIS]</scope>
    <source>
        <tissue>Cervix carcinoma</tissue>
    </source>
</reference>
<reference key="8">
    <citation type="journal article" date="2008" name="Proc. Natl. Acad. Sci. U.S.A.">
        <title>A quantitative atlas of mitotic phosphorylation.</title>
        <authorList>
            <person name="Dephoure N."/>
            <person name="Zhou C."/>
            <person name="Villen J."/>
            <person name="Beausoleil S.A."/>
            <person name="Bakalarski C.E."/>
            <person name="Elledge S.J."/>
            <person name="Gygi S.P."/>
        </authorList>
    </citation>
    <scope>IDENTIFICATION BY MASS SPECTROMETRY [LARGE SCALE ANALYSIS]</scope>
    <source>
        <tissue>Cervix carcinoma</tissue>
    </source>
</reference>
<reference key="9">
    <citation type="journal article" date="2009" name="Anal. Chem.">
        <title>Lys-N and trypsin cover complementary parts of the phosphoproteome in a refined SCX-based approach.</title>
        <authorList>
            <person name="Gauci S."/>
            <person name="Helbig A.O."/>
            <person name="Slijper M."/>
            <person name="Krijgsveld J."/>
            <person name="Heck A.J."/>
            <person name="Mohammed S."/>
        </authorList>
    </citation>
    <scope>IDENTIFICATION BY MASS SPECTROMETRY [LARGE SCALE ANALYSIS]</scope>
</reference>
<reference key="10">
    <citation type="journal article" date="2009" name="Science">
        <title>Lysine acetylation targets protein complexes and co-regulates major cellular functions.</title>
        <authorList>
            <person name="Choudhary C."/>
            <person name="Kumar C."/>
            <person name="Gnad F."/>
            <person name="Nielsen M.L."/>
            <person name="Rehman M."/>
            <person name="Walther T.C."/>
            <person name="Olsen J.V."/>
            <person name="Mann M."/>
        </authorList>
    </citation>
    <scope>ACETYLATION [LARGE SCALE ANALYSIS] AT LYS-54</scope>
    <scope>IDENTIFICATION BY MASS SPECTROMETRY [LARGE SCALE ANALYSIS]</scope>
</reference>
<reference key="11">
    <citation type="journal article" date="2010" name="Sci. Signal.">
        <title>Quantitative phosphoproteomics reveals widespread full phosphorylation site occupancy during mitosis.</title>
        <authorList>
            <person name="Olsen J.V."/>
            <person name="Vermeulen M."/>
            <person name="Santamaria A."/>
            <person name="Kumar C."/>
            <person name="Miller M.L."/>
            <person name="Jensen L.J."/>
            <person name="Gnad F."/>
            <person name="Cox J."/>
            <person name="Jensen T.S."/>
            <person name="Nigg E.A."/>
            <person name="Brunak S."/>
            <person name="Mann M."/>
        </authorList>
    </citation>
    <scope>PHOSPHORYLATION [LARGE SCALE ANALYSIS] AT SER-38</scope>
    <scope>IDENTIFICATION BY MASS SPECTROMETRY [LARGE SCALE ANALYSIS]</scope>
    <source>
        <tissue>Cervix carcinoma</tissue>
    </source>
</reference>
<reference key="12">
    <citation type="journal article" date="2011" name="BMC Syst. Biol.">
        <title>Initial characterization of the human central proteome.</title>
        <authorList>
            <person name="Burkard T.R."/>
            <person name="Planyavsky M."/>
            <person name="Kaupe I."/>
            <person name="Breitwieser F.P."/>
            <person name="Buerckstuemmer T."/>
            <person name="Bennett K.L."/>
            <person name="Superti-Furga G."/>
            <person name="Colinge J."/>
        </authorList>
    </citation>
    <scope>IDENTIFICATION BY MASS SPECTROMETRY [LARGE SCALE ANALYSIS]</scope>
</reference>
<reference key="13">
    <citation type="journal article" date="2011" name="Sci. Signal.">
        <title>System-wide temporal characterization of the proteome and phosphoproteome of human embryonic stem cell differentiation.</title>
        <authorList>
            <person name="Rigbolt K.T."/>
            <person name="Prokhorova T.A."/>
            <person name="Akimov V."/>
            <person name="Henningsen J."/>
            <person name="Johansen P.T."/>
            <person name="Kratchmarova I."/>
            <person name="Kassem M."/>
            <person name="Mann M."/>
            <person name="Olsen J.V."/>
            <person name="Blagoev B."/>
        </authorList>
    </citation>
    <scope>PHOSPHORYLATION [LARGE SCALE ANALYSIS] AT SER-38</scope>
    <scope>IDENTIFICATION BY MASS SPECTROMETRY [LARGE SCALE ANALYSIS]</scope>
</reference>
<reference key="14">
    <citation type="journal article" date="2013" name="J. Proteome Res.">
        <title>Toward a comprehensive characterization of a human cancer cell phosphoproteome.</title>
        <authorList>
            <person name="Zhou H."/>
            <person name="Di Palma S."/>
            <person name="Preisinger C."/>
            <person name="Peng M."/>
            <person name="Polat A.N."/>
            <person name="Heck A.J."/>
            <person name="Mohammed S."/>
        </authorList>
    </citation>
    <scope>PHOSPHORYLATION [LARGE SCALE ANALYSIS] AT SER-38</scope>
    <scope>IDENTIFICATION BY MASS SPECTROMETRY [LARGE SCALE ANALYSIS]</scope>
    <source>
        <tissue>Cervix carcinoma</tissue>
        <tissue>Erythroleukemia</tissue>
    </source>
</reference>
<reference key="15">
    <citation type="journal article" date="2014" name="Curr. Opin. Struct. Biol.">
        <title>A new system for naming ribosomal proteins.</title>
        <authorList>
            <person name="Ban N."/>
            <person name="Beckmann R."/>
            <person name="Cate J.H.D."/>
            <person name="Dinman J.D."/>
            <person name="Dragon F."/>
            <person name="Ellis S.R."/>
            <person name="Lafontaine D.L.J."/>
            <person name="Lindahl L."/>
            <person name="Liljas A."/>
            <person name="Lipton J.M."/>
            <person name="McAlear M.A."/>
            <person name="Moore P.B."/>
            <person name="Noller H.F."/>
            <person name="Ortega J."/>
            <person name="Panse V.G."/>
            <person name="Ramakrishnan V."/>
            <person name="Spahn C.M.T."/>
            <person name="Steitz T.A."/>
            <person name="Tchorzewski M."/>
            <person name="Tollervey D."/>
            <person name="Warren A.J."/>
            <person name="Williamson J.R."/>
            <person name="Wilson D."/>
            <person name="Yonath A."/>
            <person name="Yusupov M."/>
        </authorList>
    </citation>
    <scope>NOMENCLATURE</scope>
</reference>
<reference key="16">
    <citation type="journal article" date="2014" name="J. Proteomics">
        <title>An enzyme assisted RP-RPLC approach for in-depth analysis of human liver phosphoproteome.</title>
        <authorList>
            <person name="Bian Y."/>
            <person name="Song C."/>
            <person name="Cheng K."/>
            <person name="Dong M."/>
            <person name="Wang F."/>
            <person name="Huang J."/>
            <person name="Sun D."/>
            <person name="Wang L."/>
            <person name="Ye M."/>
            <person name="Zou H."/>
        </authorList>
    </citation>
    <scope>PHOSPHORYLATION [LARGE SCALE ANALYSIS] AT SER-165</scope>
    <scope>IDENTIFICATION BY MASS SPECTROMETRY [LARGE SCALE ANALYSIS]</scope>
    <source>
        <tissue>Liver</tissue>
    </source>
</reference>
<reference key="17">
    <citation type="journal article" date="2015" name="Proteomics">
        <title>N-terminome analysis of the human mitochondrial proteome.</title>
        <authorList>
            <person name="Vaca Jacome A.S."/>
            <person name="Rabilloud T."/>
            <person name="Schaeffer-Reiss C."/>
            <person name="Rompais M."/>
            <person name="Ayoub D."/>
            <person name="Lane L."/>
            <person name="Bairoch A."/>
            <person name="Van Dorsselaer A."/>
            <person name="Carapito C."/>
        </authorList>
    </citation>
    <scope>IDENTIFICATION BY MASS SPECTROMETRY [LARGE SCALE ANALYSIS]</scope>
</reference>
<reference key="18">
    <citation type="journal article" date="2017" name="Nat. Struct. Mol. Biol.">
        <title>Site-specific mapping of the human SUMO proteome reveals co-modification with phosphorylation.</title>
        <authorList>
            <person name="Hendriks I.A."/>
            <person name="Lyon D."/>
            <person name="Young C."/>
            <person name="Jensen L.J."/>
            <person name="Vertegaal A.C."/>
            <person name="Nielsen M.L."/>
        </authorList>
    </citation>
    <scope>SUMOYLATION [LARGE SCALE ANALYSIS] AT LYS-40</scope>
    <scope>IDENTIFICATION BY MASS SPECTROMETRY [LARGE SCALE ANALYSIS]</scope>
</reference>
<reference key="19">
    <citation type="journal article" date="2023" name="Cell">
        <title>An E3 ligase network engages GCN1 to promote the degradation of translation factors on stalled ribosomes.</title>
        <authorList>
            <person name="Oltion K."/>
            <person name="Carelli J.D."/>
            <person name="Yang T."/>
            <person name="See S.K."/>
            <person name="Wang H.Y."/>
            <person name="Kampmann M."/>
            <person name="Taunton J."/>
        </authorList>
    </citation>
    <scope>UBIQUITINATION AT LYS-48 AND LYS-83</scope>
</reference>
<reference key="20">
    <citation type="journal article" date="2013" name="Nature">
        <title>Structures of the human and Drosophila 80S ribosome.</title>
        <authorList>
            <person name="Anger A.M."/>
            <person name="Armache J.P."/>
            <person name="Berninghausen O."/>
            <person name="Habeck M."/>
            <person name="Subklewe M."/>
            <person name="Wilson D.N."/>
            <person name="Beckmann R."/>
        </authorList>
    </citation>
    <scope>STRUCTURE BY ELECTRON MICROSCOPY (5.0 ANGSTROMS) OF 80S RIBOSOME</scope>
    <scope>SUBCELLULAR LOCATION</scope>
    <scope>SUBUNIT</scope>
</reference>
<reference key="21">
    <citation type="journal article" date="2015" name="Nature">
        <title>Structure of the human 80S ribosome.</title>
        <authorList>
            <person name="Khatter H."/>
            <person name="Myasnikov A.G."/>
            <person name="Natchiar S.K."/>
            <person name="Klaholz B.P."/>
        </authorList>
    </citation>
    <scope>STRUCTURE BY ELECTRON MICROSCOPY (3.60 ANGSTROMS)</scope>
    <scope>FUNCTION</scope>
    <scope>SUBCELLULAR LOCATION</scope>
    <scope>SUBUNIT</scope>
</reference>
<keyword id="KW-0002">3D-structure</keyword>
<keyword id="KW-0007">Acetylation</keyword>
<keyword id="KW-0025">Alternative splicing</keyword>
<keyword id="KW-0963">Cytoplasm</keyword>
<keyword id="KW-1017">Isopeptide bond</keyword>
<keyword id="KW-0597">Phosphoprotein</keyword>
<keyword id="KW-1267">Proteomics identification</keyword>
<keyword id="KW-1185">Reference proteome</keyword>
<keyword id="KW-0687">Ribonucleoprotein</keyword>
<keyword id="KW-0689">Ribosomal protein</keyword>
<keyword id="KW-0694">RNA-binding</keyword>
<keyword id="KW-0832">Ubl conjugation</keyword>
<comment type="function">
    <text evidence="2">Component of the large ribosomal subunit (PubMed:25901680). The ribosome is a large ribonucleoprotein complex responsible for the synthesis of proteins in the cell (PubMed:25901680). Binds directly to 26S ribosomal RNA (PubMed:25901680).</text>
</comment>
<comment type="subunit">
    <text evidence="1 2">Component of the large ribosomal subunit (PubMed:23636399, PubMed:25901680). Mature ribosomes consist of a small (40S) and a large (60S) subunit (PubMed:23636399, PubMed:25901680). The 40S subunit contains about 33 different proteins and 1 molecule of RNA (18S) (PubMed:23636399, PubMed:25901680). The 60S subunit contains about 49 different proteins and 3 molecules of RNA (28S, 5.8S and 5S) (PubMed:23636399, PubMed:25901680).</text>
</comment>
<comment type="interaction">
    <interactant intactId="EBI-352743">
        <id>P30050</id>
    </interactant>
    <interactant intactId="EBI-355947">
        <id>P27824</id>
        <label>CANX</label>
    </interactant>
    <organismsDiffer>false</organismsDiffer>
    <experiments>3</experiments>
</comment>
<comment type="interaction">
    <interactant intactId="EBI-17208508">
        <id>P30050-2</id>
    </interactant>
    <interactant intactId="EBI-17208485">
        <id>Q8NGN3</id>
        <label>OR10G4</label>
    </interactant>
    <organismsDiffer>false</organismsDiffer>
    <experiments>3</experiments>
</comment>
<comment type="subcellular location">
    <subcellularLocation>
        <location evidence="1 2">Cytoplasm</location>
    </subcellularLocation>
</comment>
<comment type="alternative products">
    <event type="alternative splicing"/>
    <isoform>
        <id>P30050-1</id>
        <name>1</name>
        <sequence type="displayed"/>
    </isoform>
    <isoform>
        <id>P30050-2</id>
        <name>2</name>
        <sequence type="described" ref="VSP_034695"/>
    </isoform>
</comment>
<comment type="PTM">
    <text evidence="3">Ubiquitinated at Lys-48 and Lys-83 by RNF14 and RNF25 in response to ribosome collisions (ribosome stalling).</text>
</comment>
<comment type="similarity">
    <text evidence="6">Belongs to the universal ribosomal protein uL11 family.</text>
</comment>
<proteinExistence type="evidence at protein level"/>
<evidence type="ECO:0000269" key="1">
    <source>
    </source>
</evidence>
<evidence type="ECO:0000269" key="2">
    <source>
    </source>
</evidence>
<evidence type="ECO:0000269" key="3">
    <source>
    </source>
</evidence>
<evidence type="ECO:0000303" key="4">
    <source>
    </source>
</evidence>
<evidence type="ECO:0000303" key="5">
    <source>
    </source>
</evidence>
<evidence type="ECO:0000305" key="6"/>
<evidence type="ECO:0007744" key="7">
    <source>
    </source>
</evidence>
<evidence type="ECO:0007744" key="8">
    <source>
    </source>
</evidence>
<evidence type="ECO:0007744" key="9">
    <source>
    </source>
</evidence>
<evidence type="ECO:0007744" key="10">
    <source>
    </source>
</evidence>
<evidence type="ECO:0007744" key="11">
    <source>
    </source>
</evidence>
<evidence type="ECO:0007744" key="12">
    <source>
    </source>
</evidence>
<evidence type="ECO:0007744" key="13">
    <source>
    </source>
</evidence>
<evidence type="ECO:0007744" key="14">
    <source>
    </source>
</evidence>
<evidence type="ECO:0007829" key="15">
    <source>
        <dbReference type="PDB" id="7VB2"/>
    </source>
</evidence>
<protein>
    <recommendedName>
        <fullName evidence="5">Large ribosomal subunit protein uL11</fullName>
    </recommendedName>
    <alternativeName>
        <fullName>60S ribosomal protein L12</fullName>
    </alternativeName>
</protein>
<organism>
    <name type="scientific">Homo sapiens</name>
    <name type="common">Human</name>
    <dbReference type="NCBI Taxonomy" id="9606"/>
    <lineage>
        <taxon>Eukaryota</taxon>
        <taxon>Metazoa</taxon>
        <taxon>Chordata</taxon>
        <taxon>Craniata</taxon>
        <taxon>Vertebrata</taxon>
        <taxon>Euteleostomi</taxon>
        <taxon>Mammalia</taxon>
        <taxon>Eutheria</taxon>
        <taxon>Euarchontoglires</taxon>
        <taxon>Primates</taxon>
        <taxon>Haplorrhini</taxon>
        <taxon>Catarrhini</taxon>
        <taxon>Hominidae</taxon>
        <taxon>Homo</taxon>
    </lineage>
</organism>
<sequence>MPPKFDPNEIKVVYLRCTGGEVGATSALAPKIGPLGLSPKKVGDDIAKATGDWKGLRITVKLTIQNRQAQIEVVPSASALIIKALKEPPRDRKKQKNIKHSGNITFDEIVNIARQMRHRSLARELSGTIKEILGTAQSVGCNVDGRHPHDIIDDINSGAVECPAS</sequence>